<evidence type="ECO:0000255" key="1">
    <source>
        <dbReference type="HAMAP-Rule" id="MF_00508"/>
    </source>
</evidence>
<evidence type="ECO:0000305" key="2"/>
<name>RS10_RUBXD</name>
<protein>
    <recommendedName>
        <fullName evidence="1">Small ribosomal subunit protein uS10</fullName>
    </recommendedName>
    <alternativeName>
        <fullName evidence="2">30S ribosomal protein S10</fullName>
    </alternativeName>
</protein>
<reference key="1">
    <citation type="submission" date="2006-06" db="EMBL/GenBank/DDBJ databases">
        <title>Complete sequence of Rubrobacter xylanophilus DSM 9941.</title>
        <authorList>
            <consortium name="US DOE Joint Genome Institute"/>
            <person name="Copeland A."/>
            <person name="Lucas S."/>
            <person name="Lapidus A."/>
            <person name="Barry K."/>
            <person name="Detter J.C."/>
            <person name="Glavina del Rio T."/>
            <person name="Hammon N."/>
            <person name="Israni S."/>
            <person name="Dalin E."/>
            <person name="Tice H."/>
            <person name="Pitluck S."/>
            <person name="Munk A.C."/>
            <person name="Brettin T."/>
            <person name="Bruce D."/>
            <person name="Han C."/>
            <person name="Tapia R."/>
            <person name="Gilna P."/>
            <person name="Schmutz J."/>
            <person name="Larimer F."/>
            <person name="Land M."/>
            <person name="Hauser L."/>
            <person name="Kyrpides N."/>
            <person name="Lykidis A."/>
            <person name="da Costa M.S."/>
            <person name="Rainey F.A."/>
            <person name="Empadinhas N."/>
            <person name="Jolivet E."/>
            <person name="Battista J.R."/>
            <person name="Richardson P."/>
        </authorList>
    </citation>
    <scope>NUCLEOTIDE SEQUENCE [LARGE SCALE GENOMIC DNA]</scope>
    <source>
        <strain>DSM 9941 / JCM 11954 / NBRC 16129 / PRD-1</strain>
    </source>
</reference>
<keyword id="KW-1185">Reference proteome</keyword>
<keyword id="KW-0687">Ribonucleoprotein</keyword>
<keyword id="KW-0689">Ribosomal protein</keyword>
<proteinExistence type="inferred from homology"/>
<comment type="function">
    <text evidence="1">Involved in the binding of tRNA to the ribosomes.</text>
</comment>
<comment type="subunit">
    <text evidence="1">Part of the 30S ribosomal subunit.</text>
</comment>
<comment type="similarity">
    <text evidence="1">Belongs to the universal ribosomal protein uS10 family.</text>
</comment>
<gene>
    <name evidence="1" type="primary">rpsJ</name>
    <name type="ordered locus">Rxyl_2156</name>
</gene>
<organism>
    <name type="scientific">Rubrobacter xylanophilus (strain DSM 9941 / JCM 11954 / NBRC 16129 / PRD-1)</name>
    <dbReference type="NCBI Taxonomy" id="266117"/>
    <lineage>
        <taxon>Bacteria</taxon>
        <taxon>Bacillati</taxon>
        <taxon>Actinomycetota</taxon>
        <taxon>Rubrobacteria</taxon>
        <taxon>Rubrobacterales</taxon>
        <taxon>Rubrobacteraceae</taxon>
        <taxon>Rubrobacter</taxon>
    </lineage>
</organism>
<accession>Q1AU28</accession>
<dbReference type="EMBL" id="CP000386">
    <property type="protein sequence ID" value="ABG05100.1"/>
    <property type="molecule type" value="Genomic_DNA"/>
</dbReference>
<dbReference type="RefSeq" id="WP_011565115.1">
    <property type="nucleotide sequence ID" value="NC_008148.1"/>
</dbReference>
<dbReference type="SMR" id="Q1AU28"/>
<dbReference type="STRING" id="266117.Rxyl_2156"/>
<dbReference type="KEGG" id="rxy:Rxyl_2156"/>
<dbReference type="eggNOG" id="COG0051">
    <property type="taxonomic scope" value="Bacteria"/>
</dbReference>
<dbReference type="HOGENOM" id="CLU_122625_1_3_11"/>
<dbReference type="OrthoDB" id="9804464at2"/>
<dbReference type="PhylomeDB" id="Q1AU28"/>
<dbReference type="Proteomes" id="UP000006637">
    <property type="component" value="Chromosome"/>
</dbReference>
<dbReference type="GO" id="GO:1990904">
    <property type="term" value="C:ribonucleoprotein complex"/>
    <property type="evidence" value="ECO:0007669"/>
    <property type="project" value="UniProtKB-KW"/>
</dbReference>
<dbReference type="GO" id="GO:0005840">
    <property type="term" value="C:ribosome"/>
    <property type="evidence" value="ECO:0007669"/>
    <property type="project" value="UniProtKB-KW"/>
</dbReference>
<dbReference type="GO" id="GO:0003735">
    <property type="term" value="F:structural constituent of ribosome"/>
    <property type="evidence" value="ECO:0007669"/>
    <property type="project" value="InterPro"/>
</dbReference>
<dbReference type="GO" id="GO:0000049">
    <property type="term" value="F:tRNA binding"/>
    <property type="evidence" value="ECO:0007669"/>
    <property type="project" value="UniProtKB-UniRule"/>
</dbReference>
<dbReference type="GO" id="GO:0006412">
    <property type="term" value="P:translation"/>
    <property type="evidence" value="ECO:0007669"/>
    <property type="project" value="UniProtKB-UniRule"/>
</dbReference>
<dbReference type="FunFam" id="3.30.70.600:FF:000003">
    <property type="entry name" value="30S ribosomal protein S10"/>
    <property type="match status" value="1"/>
</dbReference>
<dbReference type="Gene3D" id="3.30.70.600">
    <property type="entry name" value="Ribosomal protein S10 domain"/>
    <property type="match status" value="1"/>
</dbReference>
<dbReference type="HAMAP" id="MF_00508">
    <property type="entry name" value="Ribosomal_uS10"/>
    <property type="match status" value="1"/>
</dbReference>
<dbReference type="InterPro" id="IPR001848">
    <property type="entry name" value="Ribosomal_uS10"/>
</dbReference>
<dbReference type="InterPro" id="IPR018268">
    <property type="entry name" value="Ribosomal_uS10_CS"/>
</dbReference>
<dbReference type="InterPro" id="IPR027486">
    <property type="entry name" value="Ribosomal_uS10_dom"/>
</dbReference>
<dbReference type="InterPro" id="IPR036838">
    <property type="entry name" value="Ribosomal_uS10_dom_sf"/>
</dbReference>
<dbReference type="NCBIfam" id="NF001861">
    <property type="entry name" value="PRK00596.1"/>
    <property type="match status" value="1"/>
</dbReference>
<dbReference type="NCBIfam" id="TIGR01049">
    <property type="entry name" value="rpsJ_bact"/>
    <property type="match status" value="1"/>
</dbReference>
<dbReference type="PANTHER" id="PTHR11700">
    <property type="entry name" value="30S RIBOSOMAL PROTEIN S10 FAMILY MEMBER"/>
    <property type="match status" value="1"/>
</dbReference>
<dbReference type="Pfam" id="PF00338">
    <property type="entry name" value="Ribosomal_S10"/>
    <property type="match status" value="1"/>
</dbReference>
<dbReference type="PRINTS" id="PR00971">
    <property type="entry name" value="RIBOSOMALS10"/>
</dbReference>
<dbReference type="SMART" id="SM01403">
    <property type="entry name" value="Ribosomal_S10"/>
    <property type="match status" value="1"/>
</dbReference>
<dbReference type="SUPFAM" id="SSF54999">
    <property type="entry name" value="Ribosomal protein S10"/>
    <property type="match status" value="1"/>
</dbReference>
<dbReference type="PROSITE" id="PS00361">
    <property type="entry name" value="RIBOSOMAL_S10"/>
    <property type="match status" value="1"/>
</dbReference>
<sequence>MAVSKIRIKLKAYDHEVIDKTARSIVETAERTGAFVFGPVPLPTKRSRYTVIRGPFKDKDSREHFQLNTHKRLIDIQQPTPRTVDSLQRLDLPAGVNIEIKAT</sequence>
<feature type="chain" id="PRO_0000258571" description="Small ribosomal subunit protein uS10">
    <location>
        <begin position="1"/>
        <end position="103"/>
    </location>
</feature>